<comment type="function">
    <text evidence="1">Plays a critical role in both constitutive and enhancer-dependent splicing by mediating protein-protein interactions and protein-RNA interactions required for accurate 3'-splice site selection. Recruits U2 snRNP to the branch point. Directly mediates interactions between U2AF2 and proteins bound to the enhancers and thus may function as a bridge between U2AF2 and the enhancer complex to recruit it to the adjacent intron (By similarity).</text>
</comment>
<comment type="subunit">
    <text evidence="2 3">Identified in the spliceosome C complex (By similarity). Heterodimer with U2AF2 (By similarity). Interacts (via RS domain) with PHF5A (via N-terminus) (By similarity). Interacts with ZRANB2 (By similarity). Interacts with SDE2 (By similarity). Interacts with SF3B1 (By similarity).</text>
</comment>
<comment type="subcellular location">
    <subcellularLocation>
        <location evidence="1">Nucleus</location>
    </subcellularLocation>
    <subcellularLocation>
        <location evidence="1">Nucleus speckle</location>
    </subcellularLocation>
</comment>
<comment type="domain">
    <text evidence="1">The C-terminal SR-rich domain is required for interactions with SR proteins and the splicing regulators TRA and TRA2, and the N-terminal domain is required for formation of the U2AF1/U2AF2 heterodimer.</text>
</comment>
<comment type="similarity">
    <text evidence="7">Belongs to the splicing factor SR family.</text>
</comment>
<organism>
    <name type="scientific">Bos taurus</name>
    <name type="common">Bovine</name>
    <dbReference type="NCBI Taxonomy" id="9913"/>
    <lineage>
        <taxon>Eukaryota</taxon>
        <taxon>Metazoa</taxon>
        <taxon>Chordata</taxon>
        <taxon>Craniata</taxon>
        <taxon>Vertebrata</taxon>
        <taxon>Euteleostomi</taxon>
        <taxon>Mammalia</taxon>
        <taxon>Eutheria</taxon>
        <taxon>Laurasiatheria</taxon>
        <taxon>Artiodactyla</taxon>
        <taxon>Ruminantia</taxon>
        <taxon>Pecora</taxon>
        <taxon>Bovidae</taxon>
        <taxon>Bovinae</taxon>
        <taxon>Bos</taxon>
    </lineage>
</organism>
<protein>
    <recommendedName>
        <fullName>Splicing factor U2AF 35 kDa subunit</fullName>
    </recommendedName>
    <alternativeName>
        <fullName>U2 auxiliary factor 35 kDa subunit</fullName>
    </alternativeName>
    <alternativeName>
        <fullName>U2 snRNP auxiliary factor small subunit</fullName>
    </alternativeName>
</protein>
<feature type="initiator methionine" description="Removed" evidence="2">
    <location>
        <position position="1"/>
    </location>
</feature>
<feature type="chain" id="PRO_0000285836" description="Splicing factor U2AF 35 kDa subunit">
    <location>
        <begin position="2"/>
        <end position="237"/>
    </location>
</feature>
<feature type="domain" description="RRM" evidence="4">
    <location>
        <begin position="65"/>
        <end position="147"/>
    </location>
</feature>
<feature type="zinc finger region" description="C3H1-type 1" evidence="5">
    <location>
        <begin position="12"/>
        <end position="40"/>
    </location>
</feature>
<feature type="zinc finger region" description="C3H1-type 2" evidence="5">
    <location>
        <begin position="149"/>
        <end position="176"/>
    </location>
</feature>
<feature type="region of interest" description="Disordered" evidence="6">
    <location>
        <begin position="185"/>
        <end position="237"/>
    </location>
</feature>
<feature type="compositionally biased region" description="Basic residues" evidence="6">
    <location>
        <begin position="188"/>
        <end position="208"/>
    </location>
</feature>
<feature type="compositionally biased region" description="Basic and acidic residues" evidence="6">
    <location>
        <begin position="220"/>
        <end position="237"/>
    </location>
</feature>
<feature type="modified residue" description="N-acetylalanine" evidence="2">
    <location>
        <position position="2"/>
    </location>
</feature>
<feature type="modified residue" description="N6-methyllysine" evidence="2">
    <location>
        <position position="39"/>
    </location>
</feature>
<feature type="modified residue" description="Phosphoserine" evidence="2">
    <location>
        <position position="61"/>
    </location>
</feature>
<feature type="modified residue" description="Phosphoserine" evidence="2">
    <location>
        <position position="145"/>
    </location>
</feature>
<feature type="modified residue" description="Omega-N-methylarginine" evidence="2">
    <location>
        <position position="165"/>
    </location>
</feature>
<proteinExistence type="evidence at transcript level"/>
<sequence length="237" mass="27701">MAEYLASIFGTEKDKVNCSFYFKIGACRHGDRCSRLHNKPTFSQTIALLNIYRNPQNSSQSADGLRCAVSDVEMQEHYDEFFEEVFTEMEEKYGEVEEMNVCDNLGDHLVGNVYVKFRREEDAEKAVIDLNNRWFNGQPIHAELSPVTDFREACCRQYEMGECTRGGFCNFMHLKPISRELRRELYGRRRKKHRSRSRSRERRSRSRDRGRGGGGGGGGGRERDRRRSRDRERSGRF</sequence>
<gene>
    <name type="primary">U2AF1</name>
</gene>
<keyword id="KW-0007">Acetylation</keyword>
<keyword id="KW-0479">Metal-binding</keyword>
<keyword id="KW-0488">Methylation</keyword>
<keyword id="KW-0507">mRNA processing</keyword>
<keyword id="KW-0508">mRNA splicing</keyword>
<keyword id="KW-0539">Nucleus</keyword>
<keyword id="KW-0597">Phosphoprotein</keyword>
<keyword id="KW-1185">Reference proteome</keyword>
<keyword id="KW-0677">Repeat</keyword>
<keyword id="KW-0694">RNA-binding</keyword>
<keyword id="KW-0747">Spliceosome</keyword>
<keyword id="KW-0862">Zinc</keyword>
<keyword id="KW-0863">Zinc-finger</keyword>
<dbReference type="EMBL" id="BC126638">
    <property type="protein sequence ID" value="AAI26639.1"/>
    <property type="molecule type" value="mRNA"/>
</dbReference>
<dbReference type="RefSeq" id="NP_001073737.1">
    <property type="nucleotide sequence ID" value="NM_001080268.2"/>
</dbReference>
<dbReference type="SMR" id="A1A4K8"/>
<dbReference type="FunCoup" id="A1A4K8">
    <property type="interactions" value="3500"/>
</dbReference>
<dbReference type="STRING" id="9913.ENSBTAP00000015465"/>
<dbReference type="PaxDb" id="9913-ENSBTAP00000015465"/>
<dbReference type="Ensembl" id="ENSBTAT00000015465.5">
    <property type="protein sequence ID" value="ENSBTAP00000015465.3"/>
    <property type="gene ID" value="ENSBTAG00000011645.6"/>
</dbReference>
<dbReference type="GeneID" id="512680"/>
<dbReference type="KEGG" id="bta:512680"/>
<dbReference type="CTD" id="7307"/>
<dbReference type="VEuPathDB" id="HostDB:ENSBTAG00000011645"/>
<dbReference type="eggNOG" id="KOG2202">
    <property type="taxonomic scope" value="Eukaryota"/>
</dbReference>
<dbReference type="GeneTree" id="ENSGT00950000183152"/>
<dbReference type="HOGENOM" id="CLU_059852_1_0_1"/>
<dbReference type="InParanoid" id="A1A4K8"/>
<dbReference type="OMA" id="MIDTRQA"/>
<dbReference type="OrthoDB" id="423462at2759"/>
<dbReference type="TreeFam" id="TF300143"/>
<dbReference type="Reactome" id="R-BTA-159236">
    <property type="pathway name" value="Transport of Mature mRNA derived from an Intron-Containing Transcript"/>
</dbReference>
<dbReference type="Reactome" id="R-BTA-72163">
    <property type="pathway name" value="mRNA Splicing - Major Pathway"/>
</dbReference>
<dbReference type="Reactome" id="R-BTA-72187">
    <property type="pathway name" value="mRNA 3'-end processing"/>
</dbReference>
<dbReference type="Reactome" id="R-BTA-73856">
    <property type="pathway name" value="RNA Polymerase II Transcription Termination"/>
</dbReference>
<dbReference type="Proteomes" id="UP000009136">
    <property type="component" value="Chromosome 1"/>
</dbReference>
<dbReference type="Bgee" id="ENSBTAG00000011645">
    <property type="expression patterns" value="Expressed in omental fat pad and 108 other cell types or tissues"/>
</dbReference>
<dbReference type="GO" id="GO:0016607">
    <property type="term" value="C:nuclear speck"/>
    <property type="evidence" value="ECO:0000250"/>
    <property type="project" value="UniProtKB"/>
</dbReference>
<dbReference type="GO" id="GO:0005681">
    <property type="term" value="C:spliceosomal complex"/>
    <property type="evidence" value="ECO:0000318"/>
    <property type="project" value="GO_Central"/>
</dbReference>
<dbReference type="GO" id="GO:0089701">
    <property type="term" value="C:U2AF complex"/>
    <property type="evidence" value="ECO:0000318"/>
    <property type="project" value="GO_Central"/>
</dbReference>
<dbReference type="GO" id="GO:0030628">
    <property type="term" value="F:pre-mRNA 3'-splice site binding"/>
    <property type="evidence" value="ECO:0000318"/>
    <property type="project" value="GO_Central"/>
</dbReference>
<dbReference type="GO" id="GO:0008270">
    <property type="term" value="F:zinc ion binding"/>
    <property type="evidence" value="ECO:0007669"/>
    <property type="project" value="UniProtKB-KW"/>
</dbReference>
<dbReference type="GO" id="GO:0000398">
    <property type="term" value="P:mRNA splicing, via spliceosome"/>
    <property type="evidence" value="ECO:0000318"/>
    <property type="project" value="GO_Central"/>
</dbReference>
<dbReference type="CDD" id="cd12538">
    <property type="entry name" value="RRM_U2AF35"/>
    <property type="match status" value="1"/>
</dbReference>
<dbReference type="FunFam" id="3.30.70.330:FF:000055">
    <property type="entry name" value="Splicing factor U2AF 35 kDa subunit"/>
    <property type="match status" value="1"/>
</dbReference>
<dbReference type="Gene3D" id="3.30.70.330">
    <property type="match status" value="1"/>
</dbReference>
<dbReference type="InterPro" id="IPR012677">
    <property type="entry name" value="Nucleotide-bd_a/b_plait_sf"/>
</dbReference>
<dbReference type="InterPro" id="IPR035979">
    <property type="entry name" value="RBD_domain_sf"/>
</dbReference>
<dbReference type="InterPro" id="IPR000504">
    <property type="entry name" value="RRM_dom"/>
</dbReference>
<dbReference type="InterPro" id="IPR003954">
    <property type="entry name" value="RRM_dom_euk"/>
</dbReference>
<dbReference type="InterPro" id="IPR009145">
    <property type="entry name" value="U2AF_small"/>
</dbReference>
<dbReference type="InterPro" id="IPR000571">
    <property type="entry name" value="Znf_CCCH"/>
</dbReference>
<dbReference type="PANTHER" id="PTHR12620">
    <property type="entry name" value="U2 SNRNP AUXILIARY FACTOR, SMALL SUBUNIT"/>
    <property type="match status" value="1"/>
</dbReference>
<dbReference type="Pfam" id="PF00076">
    <property type="entry name" value="RRM_1"/>
    <property type="match status" value="1"/>
</dbReference>
<dbReference type="Pfam" id="PF00642">
    <property type="entry name" value="zf-CCCH"/>
    <property type="match status" value="2"/>
</dbReference>
<dbReference type="PRINTS" id="PR01848">
    <property type="entry name" value="U2AUXFACTOR"/>
</dbReference>
<dbReference type="SMART" id="SM00360">
    <property type="entry name" value="RRM"/>
    <property type="match status" value="1"/>
</dbReference>
<dbReference type="SMART" id="SM00361">
    <property type="entry name" value="RRM_1"/>
    <property type="match status" value="1"/>
</dbReference>
<dbReference type="SMART" id="SM00356">
    <property type="entry name" value="ZnF_C3H1"/>
    <property type="match status" value="2"/>
</dbReference>
<dbReference type="SUPFAM" id="SSF54928">
    <property type="entry name" value="RNA-binding domain, RBD"/>
    <property type="match status" value="1"/>
</dbReference>
<dbReference type="PROSITE" id="PS50102">
    <property type="entry name" value="RRM"/>
    <property type="match status" value="1"/>
</dbReference>
<dbReference type="PROSITE" id="PS50103">
    <property type="entry name" value="ZF_C3H1"/>
    <property type="match status" value="2"/>
</dbReference>
<reference key="1">
    <citation type="submission" date="2006-10" db="EMBL/GenBank/DDBJ databases">
        <authorList>
            <consortium name="NIH - Mammalian Gene Collection (MGC) project"/>
        </authorList>
    </citation>
    <scope>NUCLEOTIDE SEQUENCE [LARGE SCALE MRNA]</scope>
    <source>
        <strain>Crossbred X Angus</strain>
        <tissue>Ileum</tissue>
    </source>
</reference>
<evidence type="ECO:0000250" key="1"/>
<evidence type="ECO:0000250" key="2">
    <source>
        <dbReference type="UniProtKB" id="Q01081"/>
    </source>
</evidence>
<evidence type="ECO:0000250" key="3">
    <source>
        <dbReference type="UniProtKB" id="Q9D883"/>
    </source>
</evidence>
<evidence type="ECO:0000255" key="4">
    <source>
        <dbReference type="PROSITE-ProRule" id="PRU00176"/>
    </source>
</evidence>
<evidence type="ECO:0000255" key="5">
    <source>
        <dbReference type="PROSITE-ProRule" id="PRU00723"/>
    </source>
</evidence>
<evidence type="ECO:0000256" key="6">
    <source>
        <dbReference type="SAM" id="MobiDB-lite"/>
    </source>
</evidence>
<evidence type="ECO:0000305" key="7"/>
<accession>A1A4K8</accession>
<name>U2AF1_BOVIN</name>